<dbReference type="EMBL" id="AF539617">
    <property type="protein sequence ID" value="AAN23118.1"/>
    <property type="molecule type" value="mRNA"/>
</dbReference>
<dbReference type="EMBL" id="AY170440">
    <property type="protein sequence ID" value="AAO12054.1"/>
    <property type="molecule type" value="Genomic_DNA"/>
</dbReference>
<dbReference type="EMBL" id="AAFI02000201">
    <property type="protein sequence ID" value="EAL60773.1"/>
    <property type="molecule type" value="Genomic_DNA"/>
</dbReference>
<dbReference type="RefSeq" id="XP_629204.1">
    <property type="nucleotide sequence ID" value="XM_629202.1"/>
</dbReference>
<dbReference type="SMR" id="Q8I0H7"/>
<dbReference type="FunCoup" id="Q8I0H7">
    <property type="interactions" value="618"/>
</dbReference>
<dbReference type="STRING" id="44689.Q8I0H7"/>
<dbReference type="PaxDb" id="44689-DDB0215366"/>
<dbReference type="EnsemblProtists" id="EAL60773">
    <property type="protein sequence ID" value="EAL60773"/>
    <property type="gene ID" value="DDB_G0293298"/>
</dbReference>
<dbReference type="GeneID" id="8629163"/>
<dbReference type="KEGG" id="ddi:DDB_G0293298"/>
<dbReference type="dictyBase" id="DDB_G0293298">
    <property type="gene designation" value="mhsp70"/>
</dbReference>
<dbReference type="VEuPathDB" id="AmoebaDB:DDB_G0293298"/>
<dbReference type="eggNOG" id="KOG0102">
    <property type="taxonomic scope" value="Eukaryota"/>
</dbReference>
<dbReference type="HOGENOM" id="CLU_005965_2_4_1"/>
<dbReference type="InParanoid" id="Q8I0H7"/>
<dbReference type="OMA" id="MGTDWKI"/>
<dbReference type="PhylomeDB" id="Q8I0H7"/>
<dbReference type="Reactome" id="R-DDI-3371453">
    <property type="pathway name" value="Regulation of HSF1-mediated heat shock response"/>
</dbReference>
<dbReference type="Reactome" id="R-DDI-6799198">
    <property type="pathway name" value="Complex I biogenesis"/>
</dbReference>
<dbReference type="Reactome" id="R-DDI-9837999">
    <property type="pathway name" value="Mitochondrial protein degradation"/>
</dbReference>
<dbReference type="Reactome" id="R-DDI-9865881">
    <property type="pathway name" value="Complex III assembly"/>
</dbReference>
<dbReference type="PRO" id="PR:Q8I0H7"/>
<dbReference type="Proteomes" id="UP000002195">
    <property type="component" value="Chromosome 6"/>
</dbReference>
<dbReference type="GO" id="GO:0005737">
    <property type="term" value="C:cytoplasm"/>
    <property type="evidence" value="ECO:0000318"/>
    <property type="project" value="GO_Central"/>
</dbReference>
<dbReference type="GO" id="GO:0031012">
    <property type="term" value="C:extracellular matrix"/>
    <property type="evidence" value="ECO:0007005"/>
    <property type="project" value="dictyBase"/>
</dbReference>
<dbReference type="GO" id="GO:0005739">
    <property type="term" value="C:mitochondrion"/>
    <property type="evidence" value="ECO:0000318"/>
    <property type="project" value="GO_Central"/>
</dbReference>
<dbReference type="GO" id="GO:0005524">
    <property type="term" value="F:ATP binding"/>
    <property type="evidence" value="ECO:0007669"/>
    <property type="project" value="UniProtKB-KW"/>
</dbReference>
<dbReference type="GO" id="GO:0016887">
    <property type="term" value="F:ATP hydrolysis activity"/>
    <property type="evidence" value="ECO:0000318"/>
    <property type="project" value="GO_Central"/>
</dbReference>
<dbReference type="GO" id="GO:0140662">
    <property type="term" value="F:ATP-dependent protein folding chaperone"/>
    <property type="evidence" value="ECO:0007669"/>
    <property type="project" value="InterPro"/>
</dbReference>
<dbReference type="GO" id="GO:0031072">
    <property type="term" value="F:heat shock protein binding"/>
    <property type="evidence" value="ECO:0000318"/>
    <property type="project" value="GO_Central"/>
</dbReference>
<dbReference type="GO" id="GO:0044183">
    <property type="term" value="F:protein folding chaperone"/>
    <property type="evidence" value="ECO:0000318"/>
    <property type="project" value="GO_Central"/>
</dbReference>
<dbReference type="GO" id="GO:0051082">
    <property type="term" value="F:unfolded protein binding"/>
    <property type="evidence" value="ECO:0007669"/>
    <property type="project" value="InterPro"/>
</dbReference>
<dbReference type="GO" id="GO:0051085">
    <property type="term" value="P:chaperone cofactor-dependent protein refolding"/>
    <property type="evidence" value="ECO:0000318"/>
    <property type="project" value="GO_Central"/>
</dbReference>
<dbReference type="GO" id="GO:0016226">
    <property type="term" value="P:iron-sulfur cluster assembly"/>
    <property type="evidence" value="ECO:0000318"/>
    <property type="project" value="GO_Central"/>
</dbReference>
<dbReference type="GO" id="GO:0042026">
    <property type="term" value="P:protein refolding"/>
    <property type="evidence" value="ECO:0000318"/>
    <property type="project" value="GO_Central"/>
</dbReference>
<dbReference type="CDD" id="cd11733">
    <property type="entry name" value="ASKHA_NBD_HSP70_HSPA9"/>
    <property type="match status" value="1"/>
</dbReference>
<dbReference type="FunFam" id="2.60.34.10:FF:000014">
    <property type="entry name" value="Chaperone protein DnaK HSP70"/>
    <property type="match status" value="1"/>
</dbReference>
<dbReference type="FunFam" id="3.30.30.30:FF:000003">
    <property type="entry name" value="Heat shock protein 9"/>
    <property type="match status" value="1"/>
</dbReference>
<dbReference type="FunFam" id="1.20.1270.10:FF:000001">
    <property type="entry name" value="Molecular chaperone DnaK"/>
    <property type="match status" value="1"/>
</dbReference>
<dbReference type="FunFam" id="3.30.420.40:FF:000004">
    <property type="entry name" value="Molecular chaperone DnaK"/>
    <property type="match status" value="1"/>
</dbReference>
<dbReference type="FunFam" id="3.90.640.10:FF:000003">
    <property type="entry name" value="Molecular chaperone DnaK"/>
    <property type="match status" value="1"/>
</dbReference>
<dbReference type="Gene3D" id="1.20.1270.10">
    <property type="match status" value="1"/>
</dbReference>
<dbReference type="Gene3D" id="3.30.420.40">
    <property type="match status" value="2"/>
</dbReference>
<dbReference type="Gene3D" id="3.90.640.10">
    <property type="entry name" value="Actin, Chain A, domain 4"/>
    <property type="match status" value="1"/>
</dbReference>
<dbReference type="Gene3D" id="2.60.34.10">
    <property type="entry name" value="Substrate Binding Domain Of DNAk, Chain A, domain 1"/>
    <property type="match status" value="1"/>
</dbReference>
<dbReference type="HAMAP" id="MF_00332">
    <property type="entry name" value="DnaK"/>
    <property type="match status" value="1"/>
</dbReference>
<dbReference type="InterPro" id="IPR043129">
    <property type="entry name" value="ATPase_NBD"/>
</dbReference>
<dbReference type="InterPro" id="IPR012725">
    <property type="entry name" value="Chaperone_DnaK"/>
</dbReference>
<dbReference type="InterPro" id="IPR018181">
    <property type="entry name" value="Heat_shock_70_CS"/>
</dbReference>
<dbReference type="InterPro" id="IPR029048">
    <property type="entry name" value="HSP70_C_sf"/>
</dbReference>
<dbReference type="InterPro" id="IPR029047">
    <property type="entry name" value="HSP70_peptide-bd_sf"/>
</dbReference>
<dbReference type="InterPro" id="IPR013126">
    <property type="entry name" value="Hsp_70_fam"/>
</dbReference>
<dbReference type="NCBIfam" id="NF001413">
    <property type="entry name" value="PRK00290.1"/>
    <property type="match status" value="1"/>
</dbReference>
<dbReference type="NCBIfam" id="TIGR02350">
    <property type="entry name" value="prok_dnaK"/>
    <property type="match status" value="1"/>
</dbReference>
<dbReference type="PANTHER" id="PTHR19375">
    <property type="entry name" value="HEAT SHOCK PROTEIN 70KDA"/>
    <property type="match status" value="1"/>
</dbReference>
<dbReference type="Pfam" id="PF00012">
    <property type="entry name" value="HSP70"/>
    <property type="match status" value="1"/>
</dbReference>
<dbReference type="PRINTS" id="PR00301">
    <property type="entry name" value="HEATSHOCK70"/>
</dbReference>
<dbReference type="SUPFAM" id="SSF53067">
    <property type="entry name" value="Actin-like ATPase domain"/>
    <property type="match status" value="2"/>
</dbReference>
<dbReference type="SUPFAM" id="SSF100934">
    <property type="entry name" value="Heat shock protein 70kD (HSP70), C-terminal subdomain"/>
    <property type="match status" value="1"/>
</dbReference>
<dbReference type="SUPFAM" id="SSF100920">
    <property type="entry name" value="Heat shock protein 70kD (HSP70), peptide-binding domain"/>
    <property type="match status" value="1"/>
</dbReference>
<dbReference type="PROSITE" id="PS00297">
    <property type="entry name" value="HSP70_1"/>
    <property type="match status" value="1"/>
</dbReference>
<dbReference type="PROSITE" id="PS00329">
    <property type="entry name" value="HSP70_2"/>
    <property type="match status" value="1"/>
</dbReference>
<dbReference type="PROSITE" id="PS01036">
    <property type="entry name" value="HSP70_3"/>
    <property type="match status" value="1"/>
</dbReference>
<sequence>MLRSLKALKLNSLNAQKGIRQFCSDSKISGQVIGIDLGTTNSCVAVMQGAEARVLENAEGGRTTPSVVAFTEDNQKIVGLPAKRQMVTNAENTLFATKRLIGRRFDDPMTKKDMTMVPYKIVKGPNGDAWFEVKGKMISPSEAGAMVLQKMKETAETNLGGPVTDAVITVPAYFDDSQRQATRDAGTIAGLKVQRIINEPTAAALAYGFKKDEPKTVAVYDLGGGTFDISILEIVGGVFEVRATNGDTFLGGEDFDNALLEHFVAEFKKEKGIDLTKDTMATQRLREAAEKAKCELSSTLTTEINLPYISAGPSGPVHFNMKLTRSKFEQLVADLIQRTIGPCNICLKDAGLSTSEINEVILVGGMTRMPKVQELAKSTFNKEPFKGVNPDEAVAVGAAIQGGVLKGDTKGIVLVDVTPLSLGIETLGGVFTRLIKKNTNIPASKTDTFSTAADGQSEVEIKVFQGEREMAVDNKLLAKFTLFGLPPLPKGVPQIEVTFDIDVNGMLQVIAKDKATGKAQQVRIQTSGGLSKDDIARILKESEANAEVDRKRKELVEARNNGESVVYQVEKDLVEFKDYLSQPQTEEIKKAVQAVRDVLAKEDGSAIEAEIKKLHDLTRSSFETAYKAKLDSSASKSSSTENKENKDNTTEAEFTEKK</sequence>
<evidence type="ECO:0000250" key="1"/>
<evidence type="ECO:0000256" key="2">
    <source>
        <dbReference type="SAM" id="MobiDB-lite"/>
    </source>
</evidence>
<evidence type="ECO:0000305" key="3"/>
<protein>
    <recommendedName>
        <fullName>Heat shock 70 kDa protein, mitochondrial</fullName>
    </recommendedName>
    <alternativeName>
        <fullName>75 kDa glucose-regulated protein homolog</fullName>
        <shortName>GRP-75</shortName>
    </alternativeName>
</protein>
<gene>
    <name type="primary">mhsp70</name>
    <name type="synonym">hsp70</name>
    <name type="ORF">DDB_G0293298</name>
</gene>
<proteinExistence type="evidence at protein level"/>
<reference key="1">
    <citation type="submission" date="2002-08" db="EMBL/GenBank/DDBJ databases">
        <title>Identification and cDNA cloning of the nuclear-encoded mitochondrial Hsp70 in Dictyostelium discoideum.</title>
        <authorList>
            <person name="Maroun M."/>
            <person name="Barth C."/>
        </authorList>
    </citation>
    <scope>NUCLEOTIDE SEQUENCE [GENOMIC DNA / MRNA]</scope>
</reference>
<reference key="2">
    <citation type="journal article" date="2005" name="Nature">
        <title>The genome of the social amoeba Dictyostelium discoideum.</title>
        <authorList>
            <person name="Eichinger L."/>
            <person name="Pachebat J.A."/>
            <person name="Gloeckner G."/>
            <person name="Rajandream M.A."/>
            <person name="Sucgang R."/>
            <person name="Berriman M."/>
            <person name="Song J."/>
            <person name="Olsen R."/>
            <person name="Szafranski K."/>
            <person name="Xu Q."/>
            <person name="Tunggal B."/>
            <person name="Kummerfeld S."/>
            <person name="Madera M."/>
            <person name="Konfortov B.A."/>
            <person name="Rivero F."/>
            <person name="Bankier A.T."/>
            <person name="Lehmann R."/>
            <person name="Hamlin N."/>
            <person name="Davies R."/>
            <person name="Gaudet P."/>
            <person name="Fey P."/>
            <person name="Pilcher K."/>
            <person name="Chen G."/>
            <person name="Saunders D."/>
            <person name="Sodergren E.J."/>
            <person name="Davis P."/>
            <person name="Kerhornou A."/>
            <person name="Nie X."/>
            <person name="Hall N."/>
            <person name="Anjard C."/>
            <person name="Hemphill L."/>
            <person name="Bason N."/>
            <person name="Farbrother P."/>
            <person name="Desany B."/>
            <person name="Just E."/>
            <person name="Morio T."/>
            <person name="Rost R."/>
            <person name="Churcher C.M."/>
            <person name="Cooper J."/>
            <person name="Haydock S."/>
            <person name="van Driessche N."/>
            <person name="Cronin A."/>
            <person name="Goodhead I."/>
            <person name="Muzny D.M."/>
            <person name="Mourier T."/>
            <person name="Pain A."/>
            <person name="Lu M."/>
            <person name="Harper D."/>
            <person name="Lindsay R."/>
            <person name="Hauser H."/>
            <person name="James K.D."/>
            <person name="Quiles M."/>
            <person name="Madan Babu M."/>
            <person name="Saito T."/>
            <person name="Buchrieser C."/>
            <person name="Wardroper A."/>
            <person name="Felder M."/>
            <person name="Thangavelu M."/>
            <person name="Johnson D."/>
            <person name="Knights A."/>
            <person name="Loulseged H."/>
            <person name="Mungall K.L."/>
            <person name="Oliver K."/>
            <person name="Price C."/>
            <person name="Quail M.A."/>
            <person name="Urushihara H."/>
            <person name="Hernandez J."/>
            <person name="Rabbinowitsch E."/>
            <person name="Steffen D."/>
            <person name="Sanders M."/>
            <person name="Ma J."/>
            <person name="Kohara Y."/>
            <person name="Sharp S."/>
            <person name="Simmonds M.N."/>
            <person name="Spiegler S."/>
            <person name="Tivey A."/>
            <person name="Sugano S."/>
            <person name="White B."/>
            <person name="Walker D."/>
            <person name="Woodward J.R."/>
            <person name="Winckler T."/>
            <person name="Tanaka Y."/>
            <person name="Shaulsky G."/>
            <person name="Schleicher M."/>
            <person name="Weinstock G.M."/>
            <person name="Rosenthal A."/>
            <person name="Cox E.C."/>
            <person name="Chisholm R.L."/>
            <person name="Gibbs R.A."/>
            <person name="Loomis W.F."/>
            <person name="Platzer M."/>
            <person name="Kay R.R."/>
            <person name="Williams J.G."/>
            <person name="Dear P.H."/>
            <person name="Noegel A.A."/>
            <person name="Barrell B.G."/>
            <person name="Kuspa A."/>
        </authorList>
    </citation>
    <scope>NUCLEOTIDE SEQUENCE [LARGE SCALE GENOMIC DNA]</scope>
    <source>
        <strain>AX4</strain>
    </source>
</reference>
<reference key="3">
    <citation type="submission" date="2009-07" db="UniProtKB">
        <authorList>
            <person name="Bienvenut W.V."/>
            <person name="Ura S."/>
            <person name="Insall R.H."/>
        </authorList>
    </citation>
    <scope>PROTEIN SEQUENCE OF 63-99; 124-134; 184-215; 272-284; 446-462; 480-490 AND 524-550</scope>
    <scope>IDENTIFICATION BY MASS SPECTROMETRY</scope>
    <source>
        <strain>AX2</strain>
    </source>
</reference>
<name>HSP7M_DICDI</name>
<comment type="function">
    <text evidence="1">May function in protein folding and assembly, and disassembly of protein complexes.</text>
</comment>
<comment type="subcellular location">
    <subcellularLocation>
        <location evidence="1">Mitochondrion</location>
    </subcellularLocation>
</comment>
<comment type="similarity">
    <text evidence="3">Belongs to the heat shock protein 70 family.</text>
</comment>
<organism>
    <name type="scientific">Dictyostelium discoideum</name>
    <name type="common">Social amoeba</name>
    <dbReference type="NCBI Taxonomy" id="44689"/>
    <lineage>
        <taxon>Eukaryota</taxon>
        <taxon>Amoebozoa</taxon>
        <taxon>Evosea</taxon>
        <taxon>Eumycetozoa</taxon>
        <taxon>Dictyostelia</taxon>
        <taxon>Dictyosteliales</taxon>
        <taxon>Dictyosteliaceae</taxon>
        <taxon>Dictyostelium</taxon>
    </lineage>
</organism>
<keyword id="KW-0067">ATP-binding</keyword>
<keyword id="KW-0143">Chaperone</keyword>
<keyword id="KW-0903">Direct protein sequencing</keyword>
<keyword id="KW-0496">Mitochondrion</keyword>
<keyword id="KW-0547">Nucleotide-binding</keyword>
<keyword id="KW-1185">Reference proteome</keyword>
<keyword id="KW-0809">Transit peptide</keyword>
<accession>Q8I0H7</accession>
<accession>Q54BY7</accession>
<feature type="transit peptide" description="Mitochondrion">
    <location>
        <begin position="1"/>
        <end status="unknown"/>
    </location>
</feature>
<feature type="chain" id="PRO_0000327975" description="Heat shock 70 kDa protein, mitochondrial">
    <location>
        <begin status="unknown"/>
        <end position="658"/>
    </location>
</feature>
<feature type="region of interest" description="Disordered" evidence="2">
    <location>
        <begin position="629"/>
        <end position="658"/>
    </location>
</feature>
<feature type="compositionally biased region" description="Low complexity" evidence="2">
    <location>
        <begin position="631"/>
        <end position="640"/>
    </location>
</feature>
<feature type="compositionally biased region" description="Basic and acidic residues" evidence="2">
    <location>
        <begin position="641"/>
        <end position="658"/>
    </location>
</feature>